<gene>
    <name type="ordered locus">At3g51890</name>
    <name type="ORF">ATEM1.14</name>
</gene>
<keyword id="KW-0007">Acetylation</keyword>
<keyword id="KW-0168">Coated pit</keyword>
<keyword id="KW-0175">Coiled coil</keyword>
<keyword id="KW-0968">Cytoplasmic vesicle</keyword>
<keyword id="KW-0472">Membrane</keyword>
<keyword id="KW-1185">Reference proteome</keyword>
<sequence length="258" mass="29183">MSSTLSNEESGLGDSNRSTEVDGGDGGNFTAYESRFQSQRFDSSFSNFDSQPEKESDLPCGDSSPRPETQSPPSINSFDDTNDSILPPPSAMEKEEGFALREWRRLNALRLEEKEKEEKEMVQQILEAAEQYKAEFYSKRNVTIENNKKLNREKEKFFLENQEKFYAEADKNNWKAIAELIPREVPVIENRGNKKKTATITVIQGPKPGKPTDLSRMRQVLTKLKHNPPTHMKPKLPSPSGADPNVSVSEQVTVTEKL</sequence>
<protein>
    <recommendedName>
        <fullName>Clathrin light chain 3</fullName>
    </recommendedName>
</protein>
<proteinExistence type="evidence at protein level"/>
<accession>F4J5M9</accession>
<accession>O65024</accession>
<organism>
    <name type="scientific">Arabidopsis thaliana</name>
    <name type="common">Mouse-ear cress</name>
    <dbReference type="NCBI Taxonomy" id="3702"/>
    <lineage>
        <taxon>Eukaryota</taxon>
        <taxon>Viridiplantae</taxon>
        <taxon>Streptophyta</taxon>
        <taxon>Embryophyta</taxon>
        <taxon>Tracheophyta</taxon>
        <taxon>Spermatophyta</taxon>
        <taxon>Magnoliopsida</taxon>
        <taxon>eudicotyledons</taxon>
        <taxon>Gunneridae</taxon>
        <taxon>Pentapetalae</taxon>
        <taxon>rosids</taxon>
        <taxon>malvids</taxon>
        <taxon>Brassicales</taxon>
        <taxon>Brassicaceae</taxon>
        <taxon>Camelineae</taxon>
        <taxon>Arabidopsis</taxon>
    </lineage>
</organism>
<reference key="1">
    <citation type="journal article" date="1999" name="Plant Mol. Biol.">
        <title>Fine sequence analysis of 60 kb around the Arabidopsis thaliana AtEm1 locus on chromosome III.</title>
        <authorList>
            <person name="Comella P."/>
            <person name="Wu H.-J."/>
            <person name="Laudie M."/>
            <person name="Berger C."/>
            <person name="Cooke R."/>
            <person name="Delseny M."/>
            <person name="Grellet F."/>
        </authorList>
    </citation>
    <scope>NUCLEOTIDE SEQUENCE [LARGE SCALE GENOMIC DNA]</scope>
    <source>
        <strain>cv. Columbia</strain>
    </source>
</reference>
<reference key="2">
    <citation type="journal article" date="2017" name="Plant J.">
        <title>Araport11: a complete reannotation of the Arabidopsis thaliana reference genome.</title>
        <authorList>
            <person name="Cheng C.Y."/>
            <person name="Krishnakumar V."/>
            <person name="Chan A.P."/>
            <person name="Thibaud-Nissen F."/>
            <person name="Schobel S."/>
            <person name="Town C.D."/>
        </authorList>
    </citation>
    <scope>GENOME REANNOTATION</scope>
    <source>
        <strain>cv. Columbia</strain>
    </source>
</reference>
<reference key="3">
    <citation type="submission" date="2006-07" db="EMBL/GenBank/DDBJ databases">
        <title>Large-scale analysis of RIKEN Arabidopsis full-length (RAFL) cDNAs.</title>
        <authorList>
            <person name="Totoki Y."/>
            <person name="Seki M."/>
            <person name="Ishida J."/>
            <person name="Nakajima M."/>
            <person name="Enju A."/>
            <person name="Kamiya A."/>
            <person name="Narusaka M."/>
            <person name="Shin-i T."/>
            <person name="Nakagawa M."/>
            <person name="Sakamoto N."/>
            <person name="Oishi K."/>
            <person name="Kohara Y."/>
            <person name="Kobayashi M."/>
            <person name="Toyoda A."/>
            <person name="Sakaki Y."/>
            <person name="Sakurai T."/>
            <person name="Iida K."/>
            <person name="Akiyama K."/>
            <person name="Satou M."/>
            <person name="Toyoda T."/>
            <person name="Konagaya A."/>
            <person name="Carninci P."/>
            <person name="Kawai J."/>
            <person name="Hayashizaki Y."/>
            <person name="Shinozaki K."/>
        </authorList>
    </citation>
    <scope>NUCLEOTIDE SEQUENCE [LARGE SCALE MRNA]</scope>
    <source>
        <strain>cv. Columbia</strain>
    </source>
</reference>
<reference key="4">
    <citation type="journal article" date="2012" name="Mol. Cell. Proteomics">
        <title>Comparative large-scale characterisation of plant vs. mammal proteins reveals similar and idiosyncratic N-alpha acetylation features.</title>
        <authorList>
            <person name="Bienvenut W.V."/>
            <person name="Sumpton D."/>
            <person name="Martinez A."/>
            <person name="Lilla S."/>
            <person name="Espagne C."/>
            <person name="Meinnel T."/>
            <person name="Giglione C."/>
        </authorList>
    </citation>
    <scope>ACETYLATION [LARGE SCALE ANALYSIS] AT SER-2</scope>
    <scope>CLEAVAGE OF INITIATOR METHIONINE [LARGE SCALE ANALYSIS]</scope>
    <scope>IDENTIFICATION BY MASS SPECTROMETRY [LARGE SCALE ANALYSIS]</scope>
</reference>
<name>CLC3_ARATH</name>
<feature type="initiator methionine" description="Removed" evidence="5">
    <location>
        <position position="1"/>
    </location>
</feature>
<feature type="chain" id="PRO_0000413948" description="Clathrin light chain 3">
    <location>
        <begin position="2"/>
        <end position="258"/>
    </location>
</feature>
<feature type="region of interest" description="Disordered" evidence="3">
    <location>
        <begin position="1"/>
        <end position="96"/>
    </location>
</feature>
<feature type="region of interest" description="Involved in binding clathrin heavy chain" evidence="1">
    <location>
        <begin position="90"/>
        <end position="152"/>
    </location>
</feature>
<feature type="region of interest" description="Disordered" evidence="3">
    <location>
        <begin position="224"/>
        <end position="258"/>
    </location>
</feature>
<feature type="coiled-coil region" evidence="2">
    <location>
        <begin position="105"/>
        <end position="164"/>
    </location>
</feature>
<feature type="compositionally biased region" description="Polar residues" evidence="3">
    <location>
        <begin position="1"/>
        <end position="18"/>
    </location>
</feature>
<feature type="compositionally biased region" description="Low complexity" evidence="3">
    <location>
        <begin position="34"/>
        <end position="50"/>
    </location>
</feature>
<feature type="compositionally biased region" description="Polar residues" evidence="3">
    <location>
        <begin position="66"/>
        <end position="79"/>
    </location>
</feature>
<feature type="compositionally biased region" description="Basic residues" evidence="3">
    <location>
        <begin position="224"/>
        <end position="234"/>
    </location>
</feature>
<feature type="compositionally biased region" description="Polar residues" evidence="3">
    <location>
        <begin position="246"/>
        <end position="258"/>
    </location>
</feature>
<feature type="modified residue" description="N-acetylserine" evidence="5">
    <location>
        <position position="2"/>
    </location>
</feature>
<comment type="function">
    <text>Clathrin is the major protein of the polyhedral coat of coated pits and vesicles.</text>
</comment>
<comment type="subunit">
    <text evidence="1">Clathrin coats are formed from molecules containing 3 heavy chains and 3 light chains.</text>
</comment>
<comment type="subcellular location">
    <subcellularLocation>
        <location evidence="1">Cytoplasmic vesicle membrane</location>
        <topology evidence="1">Peripheral membrane protein</topology>
        <orientation evidence="1">Cytoplasmic side</orientation>
    </subcellularLocation>
    <subcellularLocation>
        <location evidence="1">Membrane</location>
        <location evidence="1">Coated pit</location>
        <topology evidence="1">Peripheral membrane protein</topology>
        <orientation evidence="1">Cytoplasmic side</orientation>
    </subcellularLocation>
    <text evidence="1">Cytoplasmic face of coated pits and vesicles.</text>
</comment>
<comment type="similarity">
    <text evidence="4">Belongs to the clathrin light chain family.</text>
</comment>
<comment type="sequence caution" evidence="4">
    <conflict type="erroneous gene model prediction">
        <sequence resource="EMBL-CDS" id="AAC14416"/>
    </conflict>
</comment>
<comment type="sequence caution" evidence="4">
    <conflict type="frameshift">
        <sequence resource="EMBL-CDS" id="AAC14416"/>
    </conflict>
</comment>
<dbReference type="EMBL" id="AF049236">
    <property type="protein sequence ID" value="AAC14416.1"/>
    <property type="status" value="ALT_SEQ"/>
    <property type="molecule type" value="Genomic_DNA"/>
</dbReference>
<dbReference type="EMBL" id="CP002686">
    <property type="protein sequence ID" value="AEE78859.1"/>
    <property type="molecule type" value="Genomic_DNA"/>
</dbReference>
<dbReference type="EMBL" id="AK228229">
    <property type="status" value="NOT_ANNOTATED_CDS"/>
    <property type="molecule type" value="mRNA"/>
</dbReference>
<dbReference type="PIR" id="T51160">
    <property type="entry name" value="T51160"/>
</dbReference>
<dbReference type="RefSeq" id="NP_566956.4">
    <property type="nucleotide sequence ID" value="NM_115048.7"/>
</dbReference>
<dbReference type="SMR" id="F4J5M9"/>
<dbReference type="FunCoup" id="F4J5M9">
    <property type="interactions" value="2905"/>
</dbReference>
<dbReference type="IntAct" id="F4J5M9">
    <property type="interactions" value="2"/>
</dbReference>
<dbReference type="STRING" id="3702.F4J5M9"/>
<dbReference type="iPTMnet" id="F4J5M9"/>
<dbReference type="PaxDb" id="3702-AT3G51890.1"/>
<dbReference type="ProteomicsDB" id="246815"/>
<dbReference type="EnsemblPlants" id="AT3G51890.1">
    <property type="protein sequence ID" value="AT3G51890.1"/>
    <property type="gene ID" value="AT3G51890"/>
</dbReference>
<dbReference type="GeneID" id="824352"/>
<dbReference type="Gramene" id="AT3G51890.1">
    <property type="protein sequence ID" value="AT3G51890.1"/>
    <property type="gene ID" value="AT3G51890"/>
</dbReference>
<dbReference type="KEGG" id="ath:AT3G51890"/>
<dbReference type="Araport" id="AT3G51890"/>
<dbReference type="TAIR" id="AT3G51890">
    <property type="gene designation" value="CLC3"/>
</dbReference>
<dbReference type="eggNOG" id="ENOG502QVX7">
    <property type="taxonomic scope" value="Eukaryota"/>
</dbReference>
<dbReference type="HOGENOM" id="CLU_053778_1_0_1"/>
<dbReference type="InParanoid" id="F4J5M9"/>
<dbReference type="OMA" id="MEPDEGF"/>
<dbReference type="PRO" id="PR:F4J5M9"/>
<dbReference type="Proteomes" id="UP000006548">
    <property type="component" value="Chromosome 3"/>
</dbReference>
<dbReference type="ExpressionAtlas" id="F4J5M9">
    <property type="expression patterns" value="baseline and differential"/>
</dbReference>
<dbReference type="GO" id="GO:0030132">
    <property type="term" value="C:clathrin coat of coated pit"/>
    <property type="evidence" value="ECO:0007669"/>
    <property type="project" value="InterPro"/>
</dbReference>
<dbReference type="GO" id="GO:0030130">
    <property type="term" value="C:clathrin coat of trans-Golgi network vesicle"/>
    <property type="evidence" value="ECO:0007669"/>
    <property type="project" value="InterPro"/>
</dbReference>
<dbReference type="GO" id="GO:0005829">
    <property type="term" value="C:cytosol"/>
    <property type="evidence" value="ECO:0007005"/>
    <property type="project" value="TAIR"/>
</dbReference>
<dbReference type="GO" id="GO:0005198">
    <property type="term" value="F:structural molecule activity"/>
    <property type="evidence" value="ECO:0007669"/>
    <property type="project" value="InterPro"/>
</dbReference>
<dbReference type="GO" id="GO:0006886">
    <property type="term" value="P:intracellular protein transport"/>
    <property type="evidence" value="ECO:0007669"/>
    <property type="project" value="InterPro"/>
</dbReference>
<dbReference type="GO" id="GO:0016192">
    <property type="term" value="P:vesicle-mediated transport"/>
    <property type="evidence" value="ECO:0007669"/>
    <property type="project" value="InterPro"/>
</dbReference>
<dbReference type="InterPro" id="IPR000996">
    <property type="entry name" value="Clathrin_L-chain"/>
</dbReference>
<dbReference type="PANTHER" id="PTHR10639">
    <property type="entry name" value="CLATHRIN LIGHT CHAIN"/>
    <property type="match status" value="1"/>
</dbReference>
<dbReference type="PANTHER" id="PTHR10639:SF24">
    <property type="entry name" value="CLATHRIN LIGHT CHAIN 3"/>
    <property type="match status" value="1"/>
</dbReference>
<dbReference type="Pfam" id="PF01086">
    <property type="entry name" value="Clathrin_lg_ch"/>
    <property type="match status" value="1"/>
</dbReference>
<evidence type="ECO:0000250" key="1"/>
<evidence type="ECO:0000255" key="2"/>
<evidence type="ECO:0000256" key="3">
    <source>
        <dbReference type="SAM" id="MobiDB-lite"/>
    </source>
</evidence>
<evidence type="ECO:0000305" key="4"/>
<evidence type="ECO:0007744" key="5">
    <source>
    </source>
</evidence>